<comment type="function">
    <text evidence="1">Catalyzes the conversion of (8S)-3',8-cyclo-7,8-dihydroguanosine 5'-triphosphate to cyclic pyranopterin monophosphate (cPMP).</text>
</comment>
<comment type="catalytic activity">
    <reaction evidence="1">
        <text>(8S)-3',8-cyclo-7,8-dihydroguanosine 5'-triphosphate = cyclic pyranopterin phosphate + diphosphate</text>
        <dbReference type="Rhea" id="RHEA:49580"/>
        <dbReference type="ChEBI" id="CHEBI:33019"/>
        <dbReference type="ChEBI" id="CHEBI:59648"/>
        <dbReference type="ChEBI" id="CHEBI:131766"/>
        <dbReference type="EC" id="4.6.1.17"/>
    </reaction>
</comment>
<comment type="pathway">
    <text evidence="1">Cofactor biosynthesis; molybdopterin biosynthesis.</text>
</comment>
<comment type="subunit">
    <text evidence="1">Homohexamer; trimer of dimers.</text>
</comment>
<comment type="similarity">
    <text evidence="1">Belongs to the MoaC family.</text>
</comment>
<dbReference type="EC" id="4.6.1.17" evidence="1"/>
<dbReference type="EMBL" id="CP000458">
    <property type="protein sequence ID" value="ABK09388.1"/>
    <property type="molecule type" value="Genomic_DNA"/>
</dbReference>
<dbReference type="RefSeq" id="WP_011546113.1">
    <property type="nucleotide sequence ID" value="NC_008542.1"/>
</dbReference>
<dbReference type="SMR" id="A0KA61"/>
<dbReference type="KEGG" id="bch:Bcen2424_2638"/>
<dbReference type="HOGENOM" id="CLU_074693_1_1_4"/>
<dbReference type="UniPathway" id="UPA00344"/>
<dbReference type="GO" id="GO:0061799">
    <property type="term" value="F:cyclic pyranopterin monophosphate synthase activity"/>
    <property type="evidence" value="ECO:0007669"/>
    <property type="project" value="UniProtKB-UniRule"/>
</dbReference>
<dbReference type="GO" id="GO:0006777">
    <property type="term" value="P:Mo-molybdopterin cofactor biosynthetic process"/>
    <property type="evidence" value="ECO:0007669"/>
    <property type="project" value="UniProtKB-UniRule"/>
</dbReference>
<dbReference type="CDD" id="cd01420">
    <property type="entry name" value="MoaC_PE"/>
    <property type="match status" value="1"/>
</dbReference>
<dbReference type="Gene3D" id="3.30.70.640">
    <property type="entry name" value="Molybdopterin cofactor biosynthesis C (MoaC) domain"/>
    <property type="match status" value="1"/>
</dbReference>
<dbReference type="HAMAP" id="MF_01224_B">
    <property type="entry name" value="MoaC_B"/>
    <property type="match status" value="1"/>
</dbReference>
<dbReference type="InterPro" id="IPR023045">
    <property type="entry name" value="MoaC"/>
</dbReference>
<dbReference type="InterPro" id="IPR047594">
    <property type="entry name" value="MoaC_bact/euk"/>
</dbReference>
<dbReference type="InterPro" id="IPR036522">
    <property type="entry name" value="MoaC_sf"/>
</dbReference>
<dbReference type="InterPro" id="IPR050105">
    <property type="entry name" value="MoCo_biosynth_MoaA/MoaC"/>
</dbReference>
<dbReference type="InterPro" id="IPR002820">
    <property type="entry name" value="Mopterin_CF_biosynth-C_dom"/>
</dbReference>
<dbReference type="NCBIfam" id="TIGR00581">
    <property type="entry name" value="moaC"/>
    <property type="match status" value="1"/>
</dbReference>
<dbReference type="NCBIfam" id="NF006870">
    <property type="entry name" value="PRK09364.1"/>
    <property type="match status" value="1"/>
</dbReference>
<dbReference type="PANTHER" id="PTHR22960:SF29">
    <property type="entry name" value="CYCLIC PYRANOPTERIN MONOPHOSPHATE SYNTHASE"/>
    <property type="match status" value="1"/>
</dbReference>
<dbReference type="PANTHER" id="PTHR22960">
    <property type="entry name" value="MOLYBDOPTERIN COFACTOR SYNTHESIS PROTEIN A"/>
    <property type="match status" value="1"/>
</dbReference>
<dbReference type="Pfam" id="PF01967">
    <property type="entry name" value="MoaC"/>
    <property type="match status" value="1"/>
</dbReference>
<dbReference type="SUPFAM" id="SSF55040">
    <property type="entry name" value="Molybdenum cofactor biosynthesis protein C, MoaC"/>
    <property type="match status" value="1"/>
</dbReference>
<feature type="chain" id="PRO_1000054076" description="Cyclic pyranopterin monophosphate synthase">
    <location>
        <begin position="1"/>
        <end position="162"/>
    </location>
</feature>
<feature type="active site" evidence="1">
    <location>
        <position position="128"/>
    </location>
</feature>
<feature type="binding site" evidence="1">
    <location>
        <begin position="75"/>
        <end position="77"/>
    </location>
    <ligand>
        <name>substrate</name>
    </ligand>
</feature>
<feature type="binding site" evidence="1">
    <location>
        <begin position="113"/>
        <end position="114"/>
    </location>
    <ligand>
        <name>substrate</name>
    </ligand>
</feature>
<proteinExistence type="inferred from homology"/>
<protein>
    <recommendedName>
        <fullName evidence="1">Cyclic pyranopterin monophosphate synthase</fullName>
        <ecNumber evidence="1">4.6.1.17</ecNumber>
    </recommendedName>
    <alternativeName>
        <fullName evidence="1">Molybdenum cofactor biosynthesis protein C</fullName>
    </alternativeName>
</protein>
<reference key="1">
    <citation type="submission" date="2006-08" db="EMBL/GenBank/DDBJ databases">
        <title>Complete sequence of chromosome 1 of Burkholderia cenocepacia HI2424.</title>
        <authorList>
            <person name="Copeland A."/>
            <person name="Lucas S."/>
            <person name="Lapidus A."/>
            <person name="Barry K."/>
            <person name="Detter J.C."/>
            <person name="Glavina del Rio T."/>
            <person name="Hammon N."/>
            <person name="Israni S."/>
            <person name="Pitluck S."/>
            <person name="Chain P."/>
            <person name="Malfatti S."/>
            <person name="Shin M."/>
            <person name="Vergez L."/>
            <person name="Schmutz J."/>
            <person name="Larimer F."/>
            <person name="Land M."/>
            <person name="Hauser L."/>
            <person name="Kyrpides N."/>
            <person name="Kim E."/>
            <person name="LiPuma J.J."/>
            <person name="Gonzalez C.F."/>
            <person name="Konstantinidis K."/>
            <person name="Tiedje J.M."/>
            <person name="Richardson P."/>
        </authorList>
    </citation>
    <scope>NUCLEOTIDE SEQUENCE [LARGE SCALE GENOMIC DNA]</scope>
    <source>
        <strain>HI2424</strain>
    </source>
</reference>
<organism>
    <name type="scientific">Burkholderia cenocepacia (strain HI2424)</name>
    <dbReference type="NCBI Taxonomy" id="331272"/>
    <lineage>
        <taxon>Bacteria</taxon>
        <taxon>Pseudomonadati</taxon>
        <taxon>Pseudomonadota</taxon>
        <taxon>Betaproteobacteria</taxon>
        <taxon>Burkholderiales</taxon>
        <taxon>Burkholderiaceae</taxon>
        <taxon>Burkholderia</taxon>
        <taxon>Burkholderia cepacia complex</taxon>
    </lineage>
</organism>
<sequence>MSGLTHFDAAGHAHMVDVGDKQETRRIAIARGTIRMLPATFALIRDGKAKKGDVLGVARIAAIQGAKRTADLIPLCHPLALTRVAVEFELDDALPGVHCVVQVETFGRTGVEMEALTAVQVGLLTVYDMCKAVDRGMVITDVSVREKRGGKSGDWKAEDAAG</sequence>
<gene>
    <name evidence="1" type="primary">moaC</name>
    <name type="ordered locus">Bcen2424_2638</name>
</gene>
<keyword id="KW-0456">Lyase</keyword>
<keyword id="KW-0501">Molybdenum cofactor biosynthesis</keyword>
<name>MOAC_BURCH</name>
<evidence type="ECO:0000255" key="1">
    <source>
        <dbReference type="HAMAP-Rule" id="MF_01224"/>
    </source>
</evidence>
<accession>A0KA61</accession>